<keyword id="KW-0002">3D-structure</keyword>
<keyword id="KW-0007">Acetylation</keyword>
<keyword id="KW-0025">Alternative splicing</keyword>
<keyword id="KW-0067">ATP-binding</keyword>
<keyword id="KW-0547">Nucleotide-binding</keyword>
<keyword id="KW-1267">Proteomics identification</keyword>
<keyword id="KW-1185">Reference proteome</keyword>
<keyword id="KW-0808">Transferase</keyword>
<keyword id="KW-0833">Ubl conjugation pathway</keyword>
<feature type="chain" id="PRO_0000263077" description="NEDD8-conjugating enzyme UBE2F">
    <location>
        <begin position="1"/>
        <end position="185"/>
    </location>
</feature>
<feature type="domain" description="UBC core" evidence="1">
    <location>
        <begin position="32"/>
        <end position="185"/>
    </location>
</feature>
<feature type="region of interest" description="Interaction with UBA3" evidence="3">
    <location>
        <begin position="1"/>
        <end position="29"/>
    </location>
</feature>
<feature type="active site" description="Glycyl thioester intermediate" evidence="1 2 9">
    <location>
        <position position="116"/>
    </location>
</feature>
<feature type="modified residue" description="N-acetylmethionine" evidence="4">
    <location>
        <position position="1"/>
    </location>
</feature>
<feature type="splice variant" id="VSP_055749" description="In isoform 7." evidence="8">
    <original>MLTLASKLKRDDGLKGSRTAATASDSTRRVSVRDKLLVK</original>
    <variation>MVLGAGPASPVSGSP</variation>
    <location>
        <begin position="1"/>
        <end position="39"/>
    </location>
</feature>
<feature type="splice variant" id="VSP_037270" description="In isoform 3." evidence="7">
    <location>
        <begin position="40"/>
        <end position="71"/>
    </location>
</feature>
<feature type="splice variant" id="VSP_037271" description="In isoform 5." evidence="7">
    <original>DEGYYQGGKFQFETEVPDAYNMVPPKVKCLTKIWHPNITETGEICLSLLREHSIDGTGWAPTRTLKDVVWGLNSLFTDLLNFDDPLNIEAAEHHLRDKEDFRNKVDDYIKRYAR</original>
    <variation>ASQSEMPDQDLAPQHHRDRGNMSEFIERTFN</variation>
    <location>
        <begin position="72"/>
        <end position="185"/>
    </location>
</feature>
<feature type="splice variant" id="VSP_037272" description="In isoform 4." evidence="7">
    <original>SLL</original>
    <variation>RIF</variation>
    <location>
        <begin position="118"/>
        <end position="120"/>
    </location>
</feature>
<feature type="splice variant" id="VSP_037273" description="In isoform 4." evidence="7">
    <location>
        <begin position="121"/>
        <end position="185"/>
    </location>
</feature>
<feature type="splice variant" id="VSP_055750" description="In isoform 6." evidence="8">
    <location>
        <begin position="149"/>
        <end position="169"/>
    </location>
</feature>
<feature type="splice variant" id="VSP_037274" description="In isoform 2." evidence="7">
    <original>EDFRNKVDDYIKRYAR</original>
    <variation>SPMLLLHRRTSGIKWMTTSNVMPDNKRGRLQAHGLCYSLSLT</variation>
    <location>
        <begin position="170"/>
        <end position="185"/>
    </location>
</feature>
<feature type="mutagenesis site" description="Abolished NEDD8 conjugating enzyme activity." evidence="5">
    <original>C</original>
    <variation>A</variation>
    <location>
        <position position="116"/>
    </location>
</feature>
<feature type="sequence conflict" description="In Ref. 2; BAF82752." evidence="8" ref="2">
    <original>K</original>
    <variation>E</variation>
    <location>
        <position position="181"/>
    </location>
</feature>
<feature type="helix" evidence="12">
    <location>
        <begin position="4"/>
        <end position="8"/>
    </location>
</feature>
<feature type="helix" evidence="11">
    <location>
        <begin position="32"/>
        <end position="44"/>
    </location>
</feature>
<feature type="helix" evidence="11">
    <location>
        <begin position="45"/>
        <end position="47"/>
    </location>
</feature>
<feature type="strand" evidence="11">
    <location>
        <begin position="52"/>
        <end position="55"/>
    </location>
</feature>
<feature type="strand" evidence="11">
    <location>
        <begin position="57"/>
        <end position="60"/>
    </location>
</feature>
<feature type="strand" evidence="11">
    <location>
        <begin position="64"/>
        <end position="69"/>
    </location>
</feature>
<feature type="strand" evidence="11">
    <location>
        <begin position="72"/>
        <end position="74"/>
    </location>
</feature>
<feature type="turn" evidence="11">
    <location>
        <begin position="75"/>
        <end position="78"/>
    </location>
</feature>
<feature type="strand" evidence="11">
    <location>
        <begin position="81"/>
        <end position="86"/>
    </location>
</feature>
<feature type="strand" evidence="11">
    <location>
        <begin position="97"/>
        <end position="100"/>
    </location>
</feature>
<feature type="strand" evidence="11">
    <location>
        <begin position="107"/>
        <end position="109"/>
    </location>
</feature>
<feature type="strand" evidence="10">
    <location>
        <begin position="111"/>
        <end position="113"/>
    </location>
</feature>
<feature type="helix" evidence="11">
    <location>
        <begin position="118"/>
        <end position="120"/>
    </location>
</feature>
<feature type="strand" evidence="11">
    <location>
        <begin position="124"/>
        <end position="126"/>
    </location>
</feature>
<feature type="helix" evidence="11">
    <location>
        <begin position="136"/>
        <end position="145"/>
    </location>
</feature>
<feature type="turn" evidence="11">
    <location>
        <begin position="146"/>
        <end position="150"/>
    </location>
</feature>
<feature type="strand" evidence="11">
    <location>
        <begin position="153"/>
        <end position="155"/>
    </location>
</feature>
<feature type="helix" evidence="11">
    <location>
        <begin position="159"/>
        <end position="167"/>
    </location>
</feature>
<feature type="helix" evidence="11">
    <location>
        <begin position="169"/>
        <end position="183"/>
    </location>
</feature>
<reference key="1">
    <citation type="submission" date="2000-10" db="EMBL/GenBank/DDBJ databases">
        <title>NEDD8-conjugating enzyme.</title>
        <authorList>
            <person name="Gladysheva T."/>
            <person name="Chau V."/>
        </authorList>
    </citation>
    <scope>NUCLEOTIDE SEQUENCE [MRNA] (ISOFORM 1)</scope>
</reference>
<reference key="2">
    <citation type="journal article" date="2004" name="Nat. Genet.">
        <title>Complete sequencing and characterization of 21,243 full-length human cDNAs.</title>
        <authorList>
            <person name="Ota T."/>
            <person name="Suzuki Y."/>
            <person name="Nishikawa T."/>
            <person name="Otsuki T."/>
            <person name="Sugiyama T."/>
            <person name="Irie R."/>
            <person name="Wakamatsu A."/>
            <person name="Hayashi K."/>
            <person name="Sato H."/>
            <person name="Nagai K."/>
            <person name="Kimura K."/>
            <person name="Makita H."/>
            <person name="Sekine M."/>
            <person name="Obayashi M."/>
            <person name="Nishi T."/>
            <person name="Shibahara T."/>
            <person name="Tanaka T."/>
            <person name="Ishii S."/>
            <person name="Yamamoto J."/>
            <person name="Saito K."/>
            <person name="Kawai Y."/>
            <person name="Isono Y."/>
            <person name="Nakamura Y."/>
            <person name="Nagahari K."/>
            <person name="Murakami K."/>
            <person name="Yasuda T."/>
            <person name="Iwayanagi T."/>
            <person name="Wagatsuma M."/>
            <person name="Shiratori A."/>
            <person name="Sudo H."/>
            <person name="Hosoiri T."/>
            <person name="Kaku Y."/>
            <person name="Kodaira H."/>
            <person name="Kondo H."/>
            <person name="Sugawara M."/>
            <person name="Takahashi M."/>
            <person name="Kanda K."/>
            <person name="Yokoi T."/>
            <person name="Furuya T."/>
            <person name="Kikkawa E."/>
            <person name="Omura Y."/>
            <person name="Abe K."/>
            <person name="Kamihara K."/>
            <person name="Katsuta N."/>
            <person name="Sato K."/>
            <person name="Tanikawa M."/>
            <person name="Yamazaki M."/>
            <person name="Ninomiya K."/>
            <person name="Ishibashi T."/>
            <person name="Yamashita H."/>
            <person name="Murakawa K."/>
            <person name="Fujimori K."/>
            <person name="Tanai H."/>
            <person name="Kimata M."/>
            <person name="Watanabe M."/>
            <person name="Hiraoka S."/>
            <person name="Chiba Y."/>
            <person name="Ishida S."/>
            <person name="Ono Y."/>
            <person name="Takiguchi S."/>
            <person name="Watanabe S."/>
            <person name="Yosida M."/>
            <person name="Hotuta T."/>
            <person name="Kusano J."/>
            <person name="Kanehori K."/>
            <person name="Takahashi-Fujii A."/>
            <person name="Hara H."/>
            <person name="Tanase T.-O."/>
            <person name="Nomura Y."/>
            <person name="Togiya S."/>
            <person name="Komai F."/>
            <person name="Hara R."/>
            <person name="Takeuchi K."/>
            <person name="Arita M."/>
            <person name="Imose N."/>
            <person name="Musashino K."/>
            <person name="Yuuki H."/>
            <person name="Oshima A."/>
            <person name="Sasaki N."/>
            <person name="Aotsuka S."/>
            <person name="Yoshikawa Y."/>
            <person name="Matsunawa H."/>
            <person name="Ichihara T."/>
            <person name="Shiohata N."/>
            <person name="Sano S."/>
            <person name="Moriya S."/>
            <person name="Momiyama H."/>
            <person name="Satoh N."/>
            <person name="Takami S."/>
            <person name="Terashima Y."/>
            <person name="Suzuki O."/>
            <person name="Nakagawa S."/>
            <person name="Senoh A."/>
            <person name="Mizoguchi H."/>
            <person name="Goto Y."/>
            <person name="Shimizu F."/>
            <person name="Wakebe H."/>
            <person name="Hishigaki H."/>
            <person name="Watanabe T."/>
            <person name="Sugiyama A."/>
            <person name="Takemoto M."/>
            <person name="Kawakami B."/>
            <person name="Yamazaki M."/>
            <person name="Watanabe K."/>
            <person name="Kumagai A."/>
            <person name="Itakura S."/>
            <person name="Fukuzumi Y."/>
            <person name="Fujimori Y."/>
            <person name="Komiyama M."/>
            <person name="Tashiro H."/>
            <person name="Tanigami A."/>
            <person name="Fujiwara T."/>
            <person name="Ono T."/>
            <person name="Yamada K."/>
            <person name="Fujii Y."/>
            <person name="Ozaki K."/>
            <person name="Hirao M."/>
            <person name="Ohmori Y."/>
            <person name="Kawabata A."/>
            <person name="Hikiji T."/>
            <person name="Kobatake N."/>
            <person name="Inagaki H."/>
            <person name="Ikema Y."/>
            <person name="Okamoto S."/>
            <person name="Okitani R."/>
            <person name="Kawakami T."/>
            <person name="Noguchi S."/>
            <person name="Itoh T."/>
            <person name="Shigeta K."/>
            <person name="Senba T."/>
            <person name="Matsumura K."/>
            <person name="Nakajima Y."/>
            <person name="Mizuno T."/>
            <person name="Morinaga M."/>
            <person name="Sasaki M."/>
            <person name="Togashi T."/>
            <person name="Oyama M."/>
            <person name="Hata H."/>
            <person name="Watanabe M."/>
            <person name="Komatsu T."/>
            <person name="Mizushima-Sugano J."/>
            <person name="Satoh T."/>
            <person name="Shirai Y."/>
            <person name="Takahashi Y."/>
            <person name="Nakagawa K."/>
            <person name="Okumura K."/>
            <person name="Nagase T."/>
            <person name="Nomura N."/>
            <person name="Kikuchi H."/>
            <person name="Masuho Y."/>
            <person name="Yamashita R."/>
            <person name="Nakai K."/>
            <person name="Yada T."/>
            <person name="Nakamura Y."/>
            <person name="Ohara O."/>
            <person name="Isogai T."/>
            <person name="Sugano S."/>
        </authorList>
    </citation>
    <scope>NUCLEOTIDE SEQUENCE [LARGE SCALE MRNA] (ISOFORMS 1; 2; 3; 4 AND 5)</scope>
    <source>
        <tissue>Brain</tissue>
        <tissue>Brain cortex</tissue>
        <tissue>Glial tumor</tissue>
        <tissue>Substantia nigra</tissue>
        <tissue>Thymus</tissue>
    </source>
</reference>
<reference key="3">
    <citation type="journal article" date="2005" name="Nature">
        <title>Generation and annotation of the DNA sequences of human chromosomes 2 and 4.</title>
        <authorList>
            <person name="Hillier L.W."/>
            <person name="Graves T.A."/>
            <person name="Fulton R.S."/>
            <person name="Fulton L.A."/>
            <person name="Pepin K.H."/>
            <person name="Minx P."/>
            <person name="Wagner-McPherson C."/>
            <person name="Layman D."/>
            <person name="Wylie K."/>
            <person name="Sekhon M."/>
            <person name="Becker M.C."/>
            <person name="Fewell G.A."/>
            <person name="Delehaunty K.D."/>
            <person name="Miner T.L."/>
            <person name="Nash W.E."/>
            <person name="Kremitzki C."/>
            <person name="Oddy L."/>
            <person name="Du H."/>
            <person name="Sun H."/>
            <person name="Bradshaw-Cordum H."/>
            <person name="Ali J."/>
            <person name="Carter J."/>
            <person name="Cordes M."/>
            <person name="Harris A."/>
            <person name="Isak A."/>
            <person name="van Brunt A."/>
            <person name="Nguyen C."/>
            <person name="Du F."/>
            <person name="Courtney L."/>
            <person name="Kalicki J."/>
            <person name="Ozersky P."/>
            <person name="Abbott S."/>
            <person name="Armstrong J."/>
            <person name="Belter E.A."/>
            <person name="Caruso L."/>
            <person name="Cedroni M."/>
            <person name="Cotton M."/>
            <person name="Davidson T."/>
            <person name="Desai A."/>
            <person name="Elliott G."/>
            <person name="Erb T."/>
            <person name="Fronick C."/>
            <person name="Gaige T."/>
            <person name="Haakenson W."/>
            <person name="Haglund K."/>
            <person name="Holmes A."/>
            <person name="Harkins R."/>
            <person name="Kim K."/>
            <person name="Kruchowski S.S."/>
            <person name="Strong C.M."/>
            <person name="Grewal N."/>
            <person name="Goyea E."/>
            <person name="Hou S."/>
            <person name="Levy A."/>
            <person name="Martinka S."/>
            <person name="Mead K."/>
            <person name="McLellan M.D."/>
            <person name="Meyer R."/>
            <person name="Randall-Maher J."/>
            <person name="Tomlinson C."/>
            <person name="Dauphin-Kohlberg S."/>
            <person name="Kozlowicz-Reilly A."/>
            <person name="Shah N."/>
            <person name="Swearengen-Shahid S."/>
            <person name="Snider J."/>
            <person name="Strong J.T."/>
            <person name="Thompson J."/>
            <person name="Yoakum M."/>
            <person name="Leonard S."/>
            <person name="Pearman C."/>
            <person name="Trani L."/>
            <person name="Radionenko M."/>
            <person name="Waligorski J.E."/>
            <person name="Wang C."/>
            <person name="Rock S.M."/>
            <person name="Tin-Wollam A.-M."/>
            <person name="Maupin R."/>
            <person name="Latreille P."/>
            <person name="Wendl M.C."/>
            <person name="Yang S.-P."/>
            <person name="Pohl C."/>
            <person name="Wallis J.W."/>
            <person name="Spieth J."/>
            <person name="Bieri T.A."/>
            <person name="Berkowicz N."/>
            <person name="Nelson J.O."/>
            <person name="Osborne J."/>
            <person name="Ding L."/>
            <person name="Meyer R."/>
            <person name="Sabo A."/>
            <person name="Shotland Y."/>
            <person name="Sinha P."/>
            <person name="Wohldmann P.E."/>
            <person name="Cook L.L."/>
            <person name="Hickenbotham M.T."/>
            <person name="Eldred J."/>
            <person name="Williams D."/>
            <person name="Jones T.A."/>
            <person name="She X."/>
            <person name="Ciccarelli F.D."/>
            <person name="Izaurralde E."/>
            <person name="Taylor J."/>
            <person name="Schmutz J."/>
            <person name="Myers R.M."/>
            <person name="Cox D.R."/>
            <person name="Huang X."/>
            <person name="McPherson J.D."/>
            <person name="Mardis E.R."/>
            <person name="Clifton S.W."/>
            <person name="Warren W.C."/>
            <person name="Chinwalla A.T."/>
            <person name="Eddy S.R."/>
            <person name="Marra M.A."/>
            <person name="Ovcharenko I."/>
            <person name="Furey T.S."/>
            <person name="Miller W."/>
            <person name="Eichler E.E."/>
            <person name="Bork P."/>
            <person name="Suyama M."/>
            <person name="Torrents D."/>
            <person name="Waterston R.H."/>
            <person name="Wilson R.K."/>
        </authorList>
    </citation>
    <scope>NUCLEOTIDE SEQUENCE [LARGE SCALE GENOMIC DNA]</scope>
</reference>
<reference key="4">
    <citation type="submission" date="2005-07" db="EMBL/GenBank/DDBJ databases">
        <authorList>
            <person name="Mural R.J."/>
            <person name="Istrail S."/>
            <person name="Sutton G.G."/>
            <person name="Florea L."/>
            <person name="Halpern A.L."/>
            <person name="Mobarry C.M."/>
            <person name="Lippert R."/>
            <person name="Walenz B."/>
            <person name="Shatkay H."/>
            <person name="Dew I."/>
            <person name="Miller J.R."/>
            <person name="Flanigan M.J."/>
            <person name="Edwards N.J."/>
            <person name="Bolanos R."/>
            <person name="Fasulo D."/>
            <person name="Halldorsson B.V."/>
            <person name="Hannenhalli S."/>
            <person name="Turner R."/>
            <person name="Yooseph S."/>
            <person name="Lu F."/>
            <person name="Nusskern D.R."/>
            <person name="Shue B.C."/>
            <person name="Zheng X.H."/>
            <person name="Zhong F."/>
            <person name="Delcher A.L."/>
            <person name="Huson D.H."/>
            <person name="Kravitz S.A."/>
            <person name="Mouchard L."/>
            <person name="Reinert K."/>
            <person name="Remington K.A."/>
            <person name="Clark A.G."/>
            <person name="Waterman M.S."/>
            <person name="Eichler E.E."/>
            <person name="Adams M.D."/>
            <person name="Hunkapiller M.W."/>
            <person name="Myers E.W."/>
            <person name="Venter J.C."/>
        </authorList>
    </citation>
    <scope>NUCLEOTIDE SEQUENCE [LARGE SCALE GENOMIC DNA]</scope>
</reference>
<reference key="5">
    <citation type="journal article" date="2004" name="Genome Res.">
        <title>The status, quality, and expansion of the NIH full-length cDNA project: the Mammalian Gene Collection (MGC).</title>
        <authorList>
            <consortium name="The MGC Project Team"/>
        </authorList>
    </citation>
    <scope>NUCLEOTIDE SEQUENCE [LARGE SCALE MRNA] (ISOFORM 1)</scope>
    <source>
        <tissue>Brain</tissue>
    </source>
</reference>
<reference key="6">
    <citation type="journal article" date="2012" name="PLoS Pathog.">
        <title>Inhibition of a NEDD8 Cascade Restores Restriction of HIV by APOBEC3G.</title>
        <authorList>
            <person name="Stanley D.J."/>
            <person name="Bartholomeeusen K."/>
            <person name="Crosby D.C."/>
            <person name="Kim D.Y."/>
            <person name="Kwon E."/>
            <person name="Yen L."/>
            <person name="Cartozo N.C."/>
            <person name="Li M."/>
            <person name="Jaeger S."/>
            <person name="Mason-Herr J."/>
            <person name="Hayashi F."/>
            <person name="Yokoyama S."/>
            <person name="Krogan N.J."/>
            <person name="Harris R.S."/>
            <person name="Peterlin B.M."/>
            <person name="Gross J.D."/>
        </authorList>
    </citation>
    <scope>FUNCTION (MICROBIAL INFECTION)</scope>
    <scope>CATALYTIC ACTIVITY</scope>
    <scope>PATHWAY</scope>
    <scope>ACTIVE SITE</scope>
    <scope>MUTAGENESIS OF CYS-116</scope>
</reference>
<reference key="7">
    <citation type="journal article" date="2024" name="Nat. Struct. Mol. Biol.">
        <title>Noncanonical assembly, neddylation and chimeric cullin-RING/RBR ubiquitylation by the 1.8 MDa CUL9 E3 ligase complex.</title>
        <authorList>
            <person name="Horn-Ghetko D."/>
            <person name="Hopf L.V.M."/>
            <person name="Tripathi-Giesgen I."/>
            <person name="Du J."/>
            <person name="Kostrhon S."/>
            <person name="Vu D.T."/>
            <person name="Beier V."/>
            <person name="Steigenberger B."/>
            <person name="Prabu J.R."/>
            <person name="Stier L."/>
            <person name="Bruss E.M."/>
            <person name="Mann M."/>
            <person name="Xiong Y."/>
            <person name="Schulman B.A."/>
        </authorList>
    </citation>
    <scope>FUNCTION</scope>
    <scope>CATALYTIC ACTIVITY</scope>
</reference>
<reference key="8">
    <citation type="journal article" date="2009" name="Mol. Cell">
        <title>E2-RING expansion of the NEDD8 cascade confers specificity to cullin modification.</title>
        <authorList>
            <person name="Huang D.T."/>
            <person name="Ayrault O."/>
            <person name="Hunt H.W."/>
            <person name="Taherbhoy A.M."/>
            <person name="Duda D.M."/>
            <person name="Scott D.C."/>
            <person name="Borg L.A."/>
            <person name="Neale G."/>
            <person name="Murray P.J."/>
            <person name="Roussel M.F."/>
            <person name="Schulman B.A."/>
        </authorList>
    </citation>
    <scope>X-RAY CRYSTALLOGRAPHY (2.5 ANGSTROMS) OF 22-185 IN COMPLEX WITH UBA3</scope>
    <scope>FUNCTION</scope>
    <scope>PATHWAY</scope>
    <scope>TISSUE SPECIFICITY</scope>
    <scope>INTERACTION WITH UBA3; NAE1 AND RBX2</scope>
</reference>
<reference key="9">
    <citation type="submission" date="2007-08" db="PDB data bank">
        <title>Solution structure of the UQ_CON domain from human NEDD8-conjugating enzyme NCE2.</title>
        <authorList>
            <consortium name="RIKEN structural genomics initiative (RSGI)"/>
        </authorList>
    </citation>
    <scope>STRUCTURE BY NMR OF 23-185</scope>
</reference>
<reference key="10">
    <citation type="journal article" date="2013" name="Structure">
        <title>Structural conservation of distinctive N-terminal acetylation-dependent interactions across a family of mammalian NEDD8 ligation enzymes.</title>
        <authorList>
            <person name="Monda J.K."/>
            <person name="Scott D.C."/>
            <person name="Miller D.J."/>
            <person name="Lydeard J."/>
            <person name="King D."/>
            <person name="Harper J.W."/>
            <person name="Bennett E.J."/>
            <person name="Schulman B.A."/>
        </authorList>
    </citation>
    <scope>X-RAY CRYSTALLOGRAPHY (2.4 ANGSTROMS) OF 1-25 IN COMPLEX WITH DCUN1D3</scope>
    <scope>ACETYLATION AT MET-1</scope>
    <scope>FUNCTION</scope>
    <scope>CATALYTIC ACTIVITY</scope>
    <scope>PATHWAY</scope>
    <scope>INTERACTION WITH DCUN1D1; DCUN1D2; DCUN1D3; DCUN1D4 AND DCUN1D5</scope>
</reference>
<evidence type="ECO:0000255" key="1">
    <source>
        <dbReference type="PROSITE-ProRule" id="PRU00388"/>
    </source>
</evidence>
<evidence type="ECO:0000255" key="2">
    <source>
        <dbReference type="PROSITE-ProRule" id="PRU10133"/>
    </source>
</evidence>
<evidence type="ECO:0000269" key="3">
    <source>
    </source>
</evidence>
<evidence type="ECO:0000269" key="4">
    <source>
    </source>
</evidence>
<evidence type="ECO:0000269" key="5">
    <source>
    </source>
</evidence>
<evidence type="ECO:0000269" key="6">
    <source>
    </source>
</evidence>
<evidence type="ECO:0000303" key="7">
    <source>
    </source>
</evidence>
<evidence type="ECO:0000305" key="8"/>
<evidence type="ECO:0000305" key="9">
    <source>
    </source>
</evidence>
<evidence type="ECO:0007829" key="10">
    <source>
        <dbReference type="PDB" id="2EDI"/>
    </source>
</evidence>
<evidence type="ECO:0007829" key="11">
    <source>
        <dbReference type="PDB" id="3FN1"/>
    </source>
</evidence>
<evidence type="ECO:0007829" key="12">
    <source>
        <dbReference type="PDB" id="4GBA"/>
    </source>
</evidence>
<dbReference type="EC" id="2.3.2.34" evidence="4"/>
<dbReference type="EMBL" id="AF310723">
    <property type="protein sequence ID" value="AAL26792.1"/>
    <property type="molecule type" value="mRNA"/>
</dbReference>
<dbReference type="EMBL" id="AK290063">
    <property type="protein sequence ID" value="BAF82752.1"/>
    <property type="molecule type" value="mRNA"/>
</dbReference>
<dbReference type="EMBL" id="AK293334">
    <property type="protein sequence ID" value="BAG56850.1"/>
    <property type="molecule type" value="mRNA"/>
</dbReference>
<dbReference type="EMBL" id="AK294107">
    <property type="protein sequence ID" value="BAG57442.1"/>
    <property type="molecule type" value="mRNA"/>
</dbReference>
<dbReference type="EMBL" id="AK297502">
    <property type="protein sequence ID" value="BAG59915.1"/>
    <property type="molecule type" value="mRNA"/>
</dbReference>
<dbReference type="EMBL" id="AK303094">
    <property type="protein sequence ID" value="BAG64204.1"/>
    <property type="molecule type" value="mRNA"/>
</dbReference>
<dbReference type="EMBL" id="AC016776">
    <property type="protein sequence ID" value="AAY24220.1"/>
    <property type="molecule type" value="Genomic_DNA"/>
</dbReference>
<dbReference type="EMBL" id="CH471063">
    <property type="protein sequence ID" value="EAW71129.1"/>
    <property type="molecule type" value="Genomic_DNA"/>
</dbReference>
<dbReference type="EMBL" id="CH471063">
    <property type="protein sequence ID" value="EAW71132.1"/>
    <property type="molecule type" value="Genomic_DNA"/>
</dbReference>
<dbReference type="EMBL" id="BC010549">
    <property type="protein sequence ID" value="AAH10549.1"/>
    <property type="molecule type" value="mRNA"/>
</dbReference>
<dbReference type="CCDS" id="CCDS2523.1">
    <molecule id="Q969M7-1"/>
</dbReference>
<dbReference type="CCDS" id="CCDS63175.1">
    <molecule id="Q969M7-7"/>
</dbReference>
<dbReference type="CCDS" id="CCDS63176.1">
    <molecule id="Q969M7-6"/>
</dbReference>
<dbReference type="CCDS" id="CCDS63177.1">
    <molecule id="Q969M7-3"/>
</dbReference>
<dbReference type="RefSeq" id="NP_001265234.1">
    <molecule id="Q969M7-1"/>
    <property type="nucleotide sequence ID" value="NM_001278305.2"/>
</dbReference>
<dbReference type="RefSeq" id="NP_001265235.1">
    <molecule id="Q969M7-7"/>
    <property type="nucleotide sequence ID" value="NM_001278306.2"/>
</dbReference>
<dbReference type="RefSeq" id="NP_001265236.1">
    <molecule id="Q969M7-3"/>
    <property type="nucleotide sequence ID" value="NM_001278307.2"/>
</dbReference>
<dbReference type="RefSeq" id="NP_001265237.1">
    <molecule id="Q969M7-6"/>
    <property type="nucleotide sequence ID" value="NM_001278308.2"/>
</dbReference>
<dbReference type="RefSeq" id="NP_542409.1">
    <molecule id="Q969M7-1"/>
    <property type="nucleotide sequence ID" value="NM_080678.3"/>
</dbReference>
<dbReference type="PDB" id="2EDI">
    <property type="method" value="NMR"/>
    <property type="chains" value="A=26-185"/>
</dbReference>
<dbReference type="PDB" id="3FN1">
    <property type="method" value="X-ray"/>
    <property type="resolution" value="2.50 A"/>
    <property type="chains" value="B=21-185"/>
</dbReference>
<dbReference type="PDB" id="4GBA">
    <property type="method" value="X-ray"/>
    <property type="resolution" value="2.40 A"/>
    <property type="chains" value="F/G=1-25"/>
</dbReference>
<dbReference type="PDBsum" id="2EDI"/>
<dbReference type="PDBsum" id="3FN1"/>
<dbReference type="PDBsum" id="4GBA"/>
<dbReference type="SMR" id="Q969M7"/>
<dbReference type="BioGRID" id="126682">
    <property type="interactions" value="25"/>
</dbReference>
<dbReference type="ELM" id="Q969M7"/>
<dbReference type="FunCoup" id="Q969M7">
    <property type="interactions" value="2915"/>
</dbReference>
<dbReference type="IntAct" id="Q969M7">
    <property type="interactions" value="10"/>
</dbReference>
<dbReference type="STRING" id="9606.ENSP00000478474"/>
<dbReference type="BindingDB" id="Q969M7"/>
<dbReference type="ChEMBL" id="CHEMBL4523422"/>
<dbReference type="GlyGen" id="Q969M7">
    <property type="glycosylation" value="1 site, 1 O-linked glycan (1 site)"/>
</dbReference>
<dbReference type="iPTMnet" id="Q969M7"/>
<dbReference type="PhosphoSitePlus" id="Q969M7"/>
<dbReference type="BioMuta" id="UBE2F"/>
<dbReference type="DMDM" id="74751725"/>
<dbReference type="jPOST" id="Q969M7"/>
<dbReference type="MassIVE" id="Q969M7"/>
<dbReference type="PaxDb" id="9606-ENSP00000478474"/>
<dbReference type="PeptideAtlas" id="Q969M7"/>
<dbReference type="ProteomicsDB" id="46263"/>
<dbReference type="ProteomicsDB" id="75795">
    <molecule id="Q969M7-1"/>
</dbReference>
<dbReference type="ProteomicsDB" id="75796">
    <molecule id="Q969M7-2"/>
</dbReference>
<dbReference type="ProteomicsDB" id="75797">
    <molecule id="Q969M7-3"/>
</dbReference>
<dbReference type="ProteomicsDB" id="75798">
    <molecule id="Q969M7-4"/>
</dbReference>
<dbReference type="ProteomicsDB" id="75799">
    <molecule id="Q969M7-5"/>
</dbReference>
<dbReference type="ProteomicsDB" id="8148"/>
<dbReference type="Pumba" id="Q969M7"/>
<dbReference type="Antibodypedia" id="34487">
    <property type="antibodies" value="217 antibodies from 30 providers"/>
</dbReference>
<dbReference type="DNASU" id="140739"/>
<dbReference type="Ensembl" id="ENST00000272930.9">
    <molecule id="Q969M7-1"/>
    <property type="protein sequence ID" value="ENSP00000272930.4"/>
    <property type="gene ID" value="ENSG00000184182.19"/>
</dbReference>
<dbReference type="Ensembl" id="ENST00000409633.5">
    <molecule id="Q969M7-6"/>
    <property type="protein sequence ID" value="ENSP00000387299.1"/>
    <property type="gene ID" value="ENSG00000184182.19"/>
</dbReference>
<dbReference type="Ensembl" id="ENST00000409953.5">
    <molecule id="Q969M7-7"/>
    <property type="protein sequence ID" value="ENSP00000386680.1"/>
    <property type="gene ID" value="ENSG00000184182.19"/>
</dbReference>
<dbReference type="Ensembl" id="ENST00000414443.5">
    <molecule id="Q969M7-3"/>
    <property type="protein sequence ID" value="ENSP00000399183.1"/>
    <property type="gene ID" value="ENSG00000184182.19"/>
</dbReference>
<dbReference type="Ensembl" id="ENST00000433241.5">
    <molecule id="Q969M7-4"/>
    <property type="protein sequence ID" value="ENSP00000393515.1"/>
    <property type="gene ID" value="ENSG00000184182.19"/>
</dbReference>
<dbReference type="Ensembl" id="ENST00000441728.6">
    <molecule id="Q969M7-5"/>
    <property type="protein sequence ID" value="ENSP00000409749.2"/>
    <property type="gene ID" value="ENSG00000184182.19"/>
</dbReference>
<dbReference type="Ensembl" id="ENST00000612130.4">
    <molecule id="Q969M7-1"/>
    <property type="protein sequence ID" value="ENSP00000478474.1"/>
    <property type="gene ID" value="ENSG00000184182.19"/>
</dbReference>
<dbReference type="GeneID" id="140739"/>
<dbReference type="KEGG" id="hsa:140739"/>
<dbReference type="MANE-Select" id="ENST00000272930.9">
    <property type="protein sequence ID" value="ENSP00000272930.4"/>
    <property type="RefSeq nucleotide sequence ID" value="NM_080678.3"/>
    <property type="RefSeq protein sequence ID" value="NP_542409.1"/>
</dbReference>
<dbReference type="UCSC" id="uc002vxk.4">
    <molecule id="Q969M7-1"/>
    <property type="organism name" value="human"/>
</dbReference>
<dbReference type="AGR" id="HGNC:12480"/>
<dbReference type="CTD" id="140739"/>
<dbReference type="DisGeNET" id="140739"/>
<dbReference type="GeneCards" id="UBE2F"/>
<dbReference type="HGNC" id="HGNC:12480">
    <property type="gene designation" value="UBE2F"/>
</dbReference>
<dbReference type="HPA" id="ENSG00000184182">
    <property type="expression patterns" value="Low tissue specificity"/>
</dbReference>
<dbReference type="MIM" id="617700">
    <property type="type" value="gene"/>
</dbReference>
<dbReference type="neXtProt" id="NX_Q969M7"/>
<dbReference type="OpenTargets" id="ENSG00000184182"/>
<dbReference type="PharmGKB" id="PA37130"/>
<dbReference type="VEuPathDB" id="HostDB:ENSG00000184182"/>
<dbReference type="eggNOG" id="KOG0420">
    <property type="taxonomic scope" value="Eukaryota"/>
</dbReference>
<dbReference type="GeneTree" id="ENSGT00940000154349"/>
<dbReference type="InParanoid" id="Q969M7"/>
<dbReference type="OMA" id="VMQYAKR"/>
<dbReference type="OrthoDB" id="10249039at2759"/>
<dbReference type="PAN-GO" id="Q969M7">
    <property type="GO annotations" value="3 GO annotations based on evolutionary models"/>
</dbReference>
<dbReference type="PhylomeDB" id="Q969M7"/>
<dbReference type="TreeFam" id="TF101125"/>
<dbReference type="BRENDA" id="2.3.2.34">
    <property type="organism ID" value="2681"/>
</dbReference>
<dbReference type="PathwayCommons" id="Q969M7"/>
<dbReference type="Reactome" id="R-HSA-8951664">
    <property type="pathway name" value="Neddylation"/>
</dbReference>
<dbReference type="Reactome" id="R-HSA-983168">
    <property type="pathway name" value="Antigen processing: Ubiquitination &amp; Proteasome degradation"/>
</dbReference>
<dbReference type="SignaLink" id="Q969M7"/>
<dbReference type="SIGNOR" id="Q969M7"/>
<dbReference type="UniPathway" id="UPA00885"/>
<dbReference type="BioGRID-ORCS" id="140739">
    <property type="hits" value="61 hits in 1170 CRISPR screens"/>
</dbReference>
<dbReference type="EvolutionaryTrace" id="Q969M7"/>
<dbReference type="GenomeRNAi" id="140739"/>
<dbReference type="Pharos" id="Q969M7">
    <property type="development level" value="Tbio"/>
</dbReference>
<dbReference type="PRO" id="PR:Q969M7"/>
<dbReference type="Proteomes" id="UP000005640">
    <property type="component" value="Chromosome 2"/>
</dbReference>
<dbReference type="RNAct" id="Q969M7">
    <property type="molecule type" value="protein"/>
</dbReference>
<dbReference type="Bgee" id="ENSG00000184182">
    <property type="expression patterns" value="Expressed in body of pancreas and 189 other cell types or tissues"/>
</dbReference>
<dbReference type="ExpressionAtlas" id="Q969M7">
    <property type="expression patterns" value="baseline and differential"/>
</dbReference>
<dbReference type="GO" id="GO:0005829">
    <property type="term" value="C:cytosol"/>
    <property type="evidence" value="ECO:0000318"/>
    <property type="project" value="GO_Central"/>
</dbReference>
<dbReference type="GO" id="GO:0005634">
    <property type="term" value="C:nucleus"/>
    <property type="evidence" value="ECO:0000318"/>
    <property type="project" value="GO_Central"/>
</dbReference>
<dbReference type="GO" id="GO:0005524">
    <property type="term" value="F:ATP binding"/>
    <property type="evidence" value="ECO:0007669"/>
    <property type="project" value="UniProtKB-KW"/>
</dbReference>
<dbReference type="GO" id="GO:0061654">
    <property type="term" value="F:NEDD8 conjugating enzyme activity"/>
    <property type="evidence" value="ECO:0000314"/>
    <property type="project" value="UniProtKB"/>
</dbReference>
<dbReference type="GO" id="GO:0061663">
    <property type="term" value="F:NEDD8 ligase activity"/>
    <property type="evidence" value="ECO:0007669"/>
    <property type="project" value="UniProtKB-EC"/>
</dbReference>
<dbReference type="GO" id="GO:0019788">
    <property type="term" value="F:NEDD8 transferase activity"/>
    <property type="evidence" value="ECO:0000318"/>
    <property type="project" value="GO_Central"/>
</dbReference>
<dbReference type="GO" id="GO:0043687">
    <property type="term" value="P:post-translational protein modification"/>
    <property type="evidence" value="ECO:0000304"/>
    <property type="project" value="Reactome"/>
</dbReference>
<dbReference type="GO" id="GO:0045116">
    <property type="term" value="P:protein neddylation"/>
    <property type="evidence" value="ECO:0000314"/>
    <property type="project" value="UniProtKB"/>
</dbReference>
<dbReference type="CDD" id="cd23794">
    <property type="entry name" value="UBCc_UBE2F_UBE2M"/>
    <property type="match status" value="1"/>
</dbReference>
<dbReference type="FunFam" id="3.10.110.10:FF:000033">
    <property type="entry name" value="NEDD8-conjugating enzyme UBE2F"/>
    <property type="match status" value="1"/>
</dbReference>
<dbReference type="Gene3D" id="3.10.110.10">
    <property type="entry name" value="Ubiquitin Conjugating Enzyme"/>
    <property type="match status" value="1"/>
</dbReference>
<dbReference type="InterPro" id="IPR050113">
    <property type="entry name" value="Ub_conjugating_enzyme"/>
</dbReference>
<dbReference type="InterPro" id="IPR000608">
    <property type="entry name" value="UBQ-conjugat_E2_core"/>
</dbReference>
<dbReference type="InterPro" id="IPR023313">
    <property type="entry name" value="UBQ-conjugating_AS"/>
</dbReference>
<dbReference type="InterPro" id="IPR016135">
    <property type="entry name" value="UBQ-conjugating_enzyme/RWD"/>
</dbReference>
<dbReference type="PANTHER" id="PTHR24067">
    <property type="entry name" value="UBIQUITIN-CONJUGATING ENZYME E2"/>
    <property type="match status" value="1"/>
</dbReference>
<dbReference type="Pfam" id="PF00179">
    <property type="entry name" value="UQ_con"/>
    <property type="match status" value="1"/>
</dbReference>
<dbReference type="SMART" id="SM00212">
    <property type="entry name" value="UBCc"/>
    <property type="match status" value="1"/>
</dbReference>
<dbReference type="SUPFAM" id="SSF54495">
    <property type="entry name" value="UBC-like"/>
    <property type="match status" value="1"/>
</dbReference>
<dbReference type="PROSITE" id="PS00183">
    <property type="entry name" value="UBC_1"/>
    <property type="match status" value="1"/>
</dbReference>
<dbReference type="PROSITE" id="PS50127">
    <property type="entry name" value="UBC_2"/>
    <property type="match status" value="1"/>
</dbReference>
<gene>
    <name type="primary">UBE2F</name>
    <name type="synonym">NCE2</name>
</gene>
<comment type="function">
    <text evidence="3 4 5 6">Accepts the ubiquitin-like protein NEDD8 from the UBA3-NAE1 E1 complex and catalyzes its covalent attachment to other proteins (PubMed:19250909, PubMed:23201271). Together with the E3 ubiquitin ligase RNF7/RBX2, specifically neddylates cullin-5 (CUL5) (PubMed:19250909, PubMed:23201271, PubMed:23300442). Does not neddylate CUL1, CUL2, CUL3, CUL4A or CUL4B (PubMed:19250909, PubMed:23201271). Mediates neddylation of the CUL9-RBX1 complex (PubMed:38605244).</text>
</comment>
<comment type="function">
    <text evidence="5">(Microbial infection) Following infection by HIV-1 virus, participates to HIV-1 Vif protein-mediated ubiquitination and degradation of APOBEC3G by mediating neddylation of cullin-5 (CUL5).</text>
</comment>
<comment type="catalytic activity">
    <reaction evidence="4 5 6">
        <text>[E1 NEDD8-activating enzyme]-S-[NEDD8 protein]-yl-L-cysteine + [E2 NEDD8-conjugating enzyme]-L-cysteine = [E1 NEDD8-activating enzyme]-L-cysteine + [E2 NEDD8-conjugating enzyme]-S-[NEDD8-protein]-yl-L-cysteine.</text>
        <dbReference type="EC" id="2.3.2.34"/>
    </reaction>
</comment>
<comment type="pathway">
    <text evidence="3 4 5">Protein modification; protein neddylation.</text>
</comment>
<comment type="subunit">
    <text evidence="3 4">Interacts with UBA3 and RBX2 (PubMed:19250909). Interacts (N-terminally acetylated form) with (via DCUN1 domain) DCUN1D1, DCUN1D2, DCUN1D3, DCUN1D4 and DCUN1D5 (PubMed:23201271).</text>
</comment>
<comment type="interaction">
    <interactant intactId="EBI-1056876">
        <id>Q969M7</id>
    </interactant>
    <interactant intactId="EBI-356942">
        <id>P62879</id>
        <label>GNB2</label>
    </interactant>
    <organismsDiffer>false</organismsDiffer>
    <experiments>3</experiments>
</comment>
<comment type="interaction">
    <interactant intactId="EBI-1056876">
        <id>Q969M7</id>
    </interactant>
    <interactant intactId="EBI-11911016">
        <id>P80188</id>
        <label>LCN2</label>
    </interactant>
    <organismsDiffer>false</organismsDiffer>
    <experiments>3</experiments>
</comment>
<comment type="interaction">
    <interactant intactId="EBI-1056876">
        <id>Q969M7</id>
    </interactant>
    <interactant intactId="EBI-747278">
        <id>P26367</id>
        <label>PAX6</label>
    </interactant>
    <organismsDiffer>false</organismsDiffer>
    <experiments>3</experiments>
</comment>
<comment type="alternative products">
    <event type="alternative splicing"/>
    <isoform>
        <id>Q969M7-1</id>
        <name>1</name>
        <sequence type="displayed"/>
    </isoform>
    <isoform>
        <id>Q969M7-2</id>
        <name>2</name>
        <sequence type="described" ref="VSP_037274"/>
    </isoform>
    <isoform>
        <id>Q969M7-3</id>
        <name>3</name>
        <sequence type="described" ref="VSP_037270"/>
    </isoform>
    <isoform>
        <id>Q969M7-4</id>
        <name>4</name>
        <sequence type="described" ref="VSP_037272 VSP_037273"/>
    </isoform>
    <isoform>
        <id>Q969M7-5</id>
        <name>5</name>
        <sequence type="described" ref="VSP_037271"/>
    </isoform>
    <isoform>
        <id>Q969M7-6</id>
        <name>6</name>
        <sequence type="described" ref="VSP_055750"/>
    </isoform>
    <isoform>
        <id>Q969M7-7</id>
        <name>7</name>
        <sequence type="described" ref="VSP_055749"/>
    </isoform>
</comment>
<comment type="tissue specificity">
    <text evidence="3">Widely expressed (at protein level).</text>
</comment>
<comment type="PTM">
    <text evidence="4">The acetylation of Met-1 increases affinity for DCUN1D3 by about 2 orders of magnitude and is crucial for NEDD8 transfer to cullins.</text>
</comment>
<comment type="similarity">
    <text evidence="1">Belongs to the ubiquitin-conjugating enzyme family. UBE2F subfamily.</text>
</comment>
<protein>
    <recommendedName>
        <fullName>NEDD8-conjugating enzyme UBE2F</fullName>
        <ecNumber evidence="4">2.3.2.34</ecNumber>
    </recommendedName>
    <alternativeName>
        <fullName>NEDD8 carrier protein UBE2F</fullName>
    </alternativeName>
    <alternativeName>
        <fullName>NEDD8 protein ligase UBE2F</fullName>
    </alternativeName>
    <alternativeName>
        <fullName>NEDD8-conjugating enzyme 2</fullName>
    </alternativeName>
    <alternativeName>
        <fullName>RING-type E3 NEDD8 transferase UBE2F</fullName>
    </alternativeName>
    <alternativeName>
        <fullName>Ubiquitin-conjugating enzyme E2 F</fullName>
    </alternativeName>
</protein>
<name>UBE2F_HUMAN</name>
<organism>
    <name type="scientific">Homo sapiens</name>
    <name type="common">Human</name>
    <dbReference type="NCBI Taxonomy" id="9606"/>
    <lineage>
        <taxon>Eukaryota</taxon>
        <taxon>Metazoa</taxon>
        <taxon>Chordata</taxon>
        <taxon>Craniata</taxon>
        <taxon>Vertebrata</taxon>
        <taxon>Euteleostomi</taxon>
        <taxon>Mammalia</taxon>
        <taxon>Eutheria</taxon>
        <taxon>Euarchontoglires</taxon>
        <taxon>Primates</taxon>
        <taxon>Haplorrhini</taxon>
        <taxon>Catarrhini</taxon>
        <taxon>Hominidae</taxon>
        <taxon>Homo</taxon>
    </lineage>
</organism>
<sequence>MLTLASKLKRDDGLKGSRTAATASDSTRRVSVRDKLLVKEVAELEANLPCTCKVHFPDPNKLHCFQLTVTPDEGYYQGGKFQFETEVPDAYNMVPPKVKCLTKIWHPNITETGEICLSLLREHSIDGTGWAPTRTLKDVVWGLNSLFTDLLNFDDPLNIEAAEHHLRDKEDFRNKVDDYIKRYAR</sequence>
<accession>Q969M7</accession>
<accession>A8K1Z8</accession>
<accession>B4DDT9</accession>
<accession>B4DFI1</accession>
<accession>B4DMK3</accession>
<accession>B4DZU2</accession>
<accession>B8ZZG2</accession>
<accession>C9J212</accession>
<accession>H9KVB9</accession>
<proteinExistence type="evidence at protein level"/>